<comment type="function">
    <text evidence="1">Can catalyze the hydrolysis of ATP in the presence of single-stranded DNA, the ATP-dependent uptake of single-stranded DNA by duplex DNA, and the ATP-dependent hybridization of homologous single-stranded DNAs. It interacts with LexA causing its activation and leading to its autocatalytic cleavage.</text>
</comment>
<comment type="subcellular location">
    <subcellularLocation>
        <location evidence="1">Cytoplasm</location>
    </subcellularLocation>
</comment>
<comment type="similarity">
    <text evidence="1">Belongs to the RecA family.</text>
</comment>
<proteinExistence type="inferred from homology"/>
<reference key="1">
    <citation type="journal article" date="2000" name="Science">
        <title>Complete genome sequence of Neisseria meningitidis serogroup B strain MC58.</title>
        <authorList>
            <person name="Tettelin H."/>
            <person name="Saunders N.J."/>
            <person name="Heidelberg J.F."/>
            <person name="Jeffries A.C."/>
            <person name="Nelson K.E."/>
            <person name="Eisen J.A."/>
            <person name="Ketchum K.A."/>
            <person name="Hood D.W."/>
            <person name="Peden J.F."/>
            <person name="Dodson R.J."/>
            <person name="Nelson W.C."/>
            <person name="Gwinn M.L."/>
            <person name="DeBoy R.T."/>
            <person name="Peterson J.D."/>
            <person name="Hickey E.K."/>
            <person name="Haft D.H."/>
            <person name="Salzberg S.L."/>
            <person name="White O."/>
            <person name="Fleischmann R.D."/>
            <person name="Dougherty B.A."/>
            <person name="Mason T.M."/>
            <person name="Ciecko A."/>
            <person name="Parksey D.S."/>
            <person name="Blair E."/>
            <person name="Cittone H."/>
            <person name="Clark E.B."/>
            <person name="Cotton M.D."/>
            <person name="Utterback T.R."/>
            <person name="Khouri H.M."/>
            <person name="Qin H."/>
            <person name="Vamathevan J.J."/>
            <person name="Gill J."/>
            <person name="Scarlato V."/>
            <person name="Masignani V."/>
            <person name="Pizza M."/>
            <person name="Grandi G."/>
            <person name="Sun L."/>
            <person name="Smith H.O."/>
            <person name="Fraser C.M."/>
            <person name="Moxon E.R."/>
            <person name="Rappuoli R."/>
            <person name="Venter J.C."/>
        </authorList>
    </citation>
    <scope>NUCLEOTIDE SEQUENCE [LARGE SCALE GENOMIC DNA]</scope>
    <source>
        <strain>ATCC BAA-335 / MC58</strain>
    </source>
</reference>
<reference key="2">
    <citation type="journal article" date="1992" name="Mol. Microbiol.">
        <title>Sequence diversity within the argF, fbp and recA genes of natural isolates of Neisseria meningitidis: interspecies recombination within the argF gene.</title>
        <authorList>
            <person name="Zhou J."/>
            <person name="Spratt B.G."/>
        </authorList>
    </citation>
    <scope>NUCLEOTIDE SEQUENCE [GENOMIC DNA] OF 24-297</scope>
    <source>
        <strain>CCUG 23094 / S3446 / Serogroup B / Serotype 14</strain>
        <strain>HF116 / Serogroup Z / Serotype NT</strain>
        <strain>HF130 / Serogroup B / Serotype NT</strain>
        <strain>N94II / Serogroup Y / Serotype NT</strain>
        <strain>P63 / Serogroup B / Serotype NT / Subtype 2</strain>
    </source>
</reference>
<reference key="3">
    <citation type="journal article" date="1996" name="J. Mol. Evol.">
        <title>A comparison of the nucleotide sequences of the adk and recA genes of pathogenic and commensal Neisseria species: evidence for extensive interspecies recombination within adk.</title>
        <authorList>
            <person name="Feil E."/>
            <person name="Zhou J."/>
            <person name="Maynard Smith J."/>
            <person name="Spratt B.G."/>
        </authorList>
    </citation>
    <scope>NUCLEOTIDE SEQUENCE [GENOMIC DNA] OF 24-297</scope>
    <source>
        <strain>CCUG 23094 / S3446 / Serogroup B / Serotype 14</strain>
    </source>
</reference>
<accession>P0DH59</accession>
<accession>P49984</accession>
<accession>P56988</accession>
<dbReference type="EMBL" id="AE002098">
    <property type="protein sequence ID" value="AAF41805.1"/>
    <property type="molecule type" value="Genomic_DNA"/>
</dbReference>
<dbReference type="EMBL" id="X64843">
    <property type="protein sequence ID" value="CAA46055.1"/>
    <property type="molecule type" value="Genomic_DNA"/>
</dbReference>
<dbReference type="EMBL" id="X64844">
    <property type="protein sequence ID" value="CAA46056.1"/>
    <property type="molecule type" value="Genomic_DNA"/>
</dbReference>
<dbReference type="EMBL" id="X64845">
    <property type="protein sequence ID" value="CAA46057.1"/>
    <property type="molecule type" value="Genomic_DNA"/>
</dbReference>
<dbReference type="EMBL" id="X64846">
    <property type="protein sequence ID" value="CAA46058.1"/>
    <property type="molecule type" value="Genomic_DNA"/>
</dbReference>
<dbReference type="EMBL" id="X64848">
    <property type="protein sequence ID" value="CAA46060.1"/>
    <property type="molecule type" value="Genomic_DNA"/>
</dbReference>
<dbReference type="EMBL" id="U57903">
    <property type="protein sequence ID" value="AAB49196.1"/>
    <property type="molecule type" value="Genomic_DNA"/>
</dbReference>
<dbReference type="PIR" id="F81082">
    <property type="entry name" value="F81082"/>
</dbReference>
<dbReference type="PIR" id="S24745">
    <property type="entry name" value="S24745"/>
</dbReference>
<dbReference type="RefSeq" id="NP_274457.1">
    <property type="nucleotide sequence ID" value="NC_003112.2"/>
</dbReference>
<dbReference type="RefSeq" id="WP_002213013.1">
    <property type="nucleotide sequence ID" value="NC_003112.2"/>
</dbReference>
<dbReference type="SMR" id="P0DH59"/>
<dbReference type="FunCoup" id="P0DH59">
    <property type="interactions" value="471"/>
</dbReference>
<dbReference type="STRING" id="122586.NMB1445"/>
<dbReference type="PaxDb" id="122586-NMB1445"/>
<dbReference type="GeneID" id="93387925"/>
<dbReference type="KEGG" id="nme:NMB1445"/>
<dbReference type="PATRIC" id="fig|122586.8.peg.1820"/>
<dbReference type="HOGENOM" id="CLU_040469_3_2_4"/>
<dbReference type="InParanoid" id="P0DH59"/>
<dbReference type="OrthoDB" id="9776733at2"/>
<dbReference type="Proteomes" id="UP000000425">
    <property type="component" value="Chromosome"/>
</dbReference>
<dbReference type="GO" id="GO:0005737">
    <property type="term" value="C:cytoplasm"/>
    <property type="evidence" value="ECO:0007669"/>
    <property type="project" value="UniProtKB-SubCell"/>
</dbReference>
<dbReference type="GO" id="GO:0005524">
    <property type="term" value="F:ATP binding"/>
    <property type="evidence" value="ECO:0007669"/>
    <property type="project" value="UniProtKB-UniRule"/>
</dbReference>
<dbReference type="GO" id="GO:0016887">
    <property type="term" value="F:ATP hydrolysis activity"/>
    <property type="evidence" value="ECO:0007669"/>
    <property type="project" value="InterPro"/>
</dbReference>
<dbReference type="GO" id="GO:0140664">
    <property type="term" value="F:ATP-dependent DNA damage sensor activity"/>
    <property type="evidence" value="ECO:0007669"/>
    <property type="project" value="InterPro"/>
</dbReference>
<dbReference type="GO" id="GO:0003684">
    <property type="term" value="F:damaged DNA binding"/>
    <property type="evidence" value="ECO:0007669"/>
    <property type="project" value="UniProtKB-UniRule"/>
</dbReference>
<dbReference type="GO" id="GO:0003697">
    <property type="term" value="F:single-stranded DNA binding"/>
    <property type="evidence" value="ECO:0007669"/>
    <property type="project" value="UniProtKB-UniRule"/>
</dbReference>
<dbReference type="GO" id="GO:0006310">
    <property type="term" value="P:DNA recombination"/>
    <property type="evidence" value="ECO:0007669"/>
    <property type="project" value="UniProtKB-UniRule"/>
</dbReference>
<dbReference type="GO" id="GO:0006281">
    <property type="term" value="P:DNA repair"/>
    <property type="evidence" value="ECO:0007669"/>
    <property type="project" value="UniProtKB-UniRule"/>
</dbReference>
<dbReference type="GO" id="GO:0009432">
    <property type="term" value="P:SOS response"/>
    <property type="evidence" value="ECO:0007669"/>
    <property type="project" value="UniProtKB-UniRule"/>
</dbReference>
<dbReference type="CDD" id="cd00983">
    <property type="entry name" value="RecA"/>
    <property type="match status" value="1"/>
</dbReference>
<dbReference type="FunFam" id="3.40.50.300:FF:000087">
    <property type="entry name" value="Recombinase RecA"/>
    <property type="match status" value="1"/>
</dbReference>
<dbReference type="Gene3D" id="3.40.50.300">
    <property type="entry name" value="P-loop containing nucleotide triphosphate hydrolases"/>
    <property type="match status" value="1"/>
</dbReference>
<dbReference type="HAMAP" id="MF_00268">
    <property type="entry name" value="RecA"/>
    <property type="match status" value="1"/>
</dbReference>
<dbReference type="InterPro" id="IPR003593">
    <property type="entry name" value="AAA+_ATPase"/>
</dbReference>
<dbReference type="InterPro" id="IPR013765">
    <property type="entry name" value="DNA_recomb/repair_RecA"/>
</dbReference>
<dbReference type="InterPro" id="IPR020584">
    <property type="entry name" value="DNA_recomb/repair_RecA_CS"/>
</dbReference>
<dbReference type="InterPro" id="IPR027417">
    <property type="entry name" value="P-loop_NTPase"/>
</dbReference>
<dbReference type="InterPro" id="IPR049261">
    <property type="entry name" value="RecA-like_C"/>
</dbReference>
<dbReference type="InterPro" id="IPR049428">
    <property type="entry name" value="RecA-like_N"/>
</dbReference>
<dbReference type="InterPro" id="IPR020588">
    <property type="entry name" value="RecA_ATP-bd"/>
</dbReference>
<dbReference type="InterPro" id="IPR023400">
    <property type="entry name" value="RecA_C_sf"/>
</dbReference>
<dbReference type="InterPro" id="IPR020587">
    <property type="entry name" value="RecA_monomer-monomer_interface"/>
</dbReference>
<dbReference type="NCBIfam" id="TIGR02012">
    <property type="entry name" value="tigrfam_recA"/>
    <property type="match status" value="1"/>
</dbReference>
<dbReference type="PANTHER" id="PTHR45900:SF1">
    <property type="entry name" value="MITOCHONDRIAL DNA REPAIR PROTEIN RECA HOMOLOG-RELATED"/>
    <property type="match status" value="1"/>
</dbReference>
<dbReference type="PANTHER" id="PTHR45900">
    <property type="entry name" value="RECA"/>
    <property type="match status" value="1"/>
</dbReference>
<dbReference type="Pfam" id="PF00154">
    <property type="entry name" value="RecA"/>
    <property type="match status" value="1"/>
</dbReference>
<dbReference type="Pfam" id="PF21096">
    <property type="entry name" value="RecA_C"/>
    <property type="match status" value="1"/>
</dbReference>
<dbReference type="PRINTS" id="PR00142">
    <property type="entry name" value="RECA"/>
</dbReference>
<dbReference type="SMART" id="SM00382">
    <property type="entry name" value="AAA"/>
    <property type="match status" value="1"/>
</dbReference>
<dbReference type="SUPFAM" id="SSF52540">
    <property type="entry name" value="P-loop containing nucleoside triphosphate hydrolases"/>
    <property type="match status" value="1"/>
</dbReference>
<dbReference type="SUPFAM" id="SSF54752">
    <property type="entry name" value="RecA protein, C-terminal domain"/>
    <property type="match status" value="1"/>
</dbReference>
<dbReference type="PROSITE" id="PS00321">
    <property type="entry name" value="RECA_1"/>
    <property type="match status" value="1"/>
</dbReference>
<dbReference type="PROSITE" id="PS50162">
    <property type="entry name" value="RECA_2"/>
    <property type="match status" value="1"/>
</dbReference>
<dbReference type="PROSITE" id="PS50163">
    <property type="entry name" value="RECA_3"/>
    <property type="match status" value="1"/>
</dbReference>
<sequence>MSDDKSKALAAALAQIEKSFGKGAIMKMDGSQQEENLEVISTGSLGLDLALGVGGLPRGRIVEIFGPESSGKTTLCLEAVAQCQKNGGVCAFVDAEHAFDPVYARKLGVKVEELYLSQPDTGEQALEICDTLVRSGGIDMVVVDSVAALVPKAEIEGDMGDSHVGLQARLMSQALRKLTGHIKKTNTLVVFINQIRMKIGVMFGSPETTTGGNALKFYSSVRLDIRRTGSIKKGEEVLGNETRVKVIKNKVAPPFRQAEFDILYGEGISWEGELIDIGVKNDIINKSGAWYSYNGAKIGQGKDNVRVWLKENPEVANEIDAKIRALNGVEMHITEGTQDETDGERPEE</sequence>
<name>RECA_NEIMB</name>
<gene>
    <name evidence="1" type="primary">recA</name>
    <name type="ordered locus">NMB1445</name>
</gene>
<evidence type="ECO:0000255" key="1">
    <source>
        <dbReference type="HAMAP-Rule" id="MF_00268"/>
    </source>
</evidence>
<keyword id="KW-0067">ATP-binding</keyword>
<keyword id="KW-0963">Cytoplasm</keyword>
<keyword id="KW-0227">DNA damage</keyword>
<keyword id="KW-0233">DNA recombination</keyword>
<keyword id="KW-0234">DNA repair</keyword>
<keyword id="KW-0238">DNA-binding</keyword>
<keyword id="KW-0547">Nucleotide-binding</keyword>
<keyword id="KW-1185">Reference proteome</keyword>
<keyword id="KW-0742">SOS response</keyword>
<protein>
    <recommendedName>
        <fullName evidence="1">Protein RecA</fullName>
    </recommendedName>
    <alternativeName>
        <fullName evidence="1">Recombinase A</fullName>
    </alternativeName>
</protein>
<feature type="chain" id="PRO_0000122778" description="Protein RecA">
    <location>
        <begin position="1"/>
        <end position="348"/>
    </location>
</feature>
<feature type="binding site" evidence="1">
    <location>
        <begin position="66"/>
        <end position="73"/>
    </location>
    <ligand>
        <name>ATP</name>
        <dbReference type="ChEBI" id="CHEBI:30616"/>
    </ligand>
</feature>
<feature type="sequence variant" description="In strain: P63.">
    <original>I</original>
    <variation>V</variation>
    <location>
        <position position="138"/>
    </location>
</feature>
<organism>
    <name type="scientific">Neisseria meningitidis serogroup B (strain ATCC BAA-335 / MC58)</name>
    <dbReference type="NCBI Taxonomy" id="122586"/>
    <lineage>
        <taxon>Bacteria</taxon>
        <taxon>Pseudomonadati</taxon>
        <taxon>Pseudomonadota</taxon>
        <taxon>Betaproteobacteria</taxon>
        <taxon>Neisseriales</taxon>
        <taxon>Neisseriaceae</taxon>
        <taxon>Neisseria</taxon>
    </lineage>
</organism>